<organism>
    <name type="scientific">Heterosigma akashiwo (strain NIES-293 / 8280G21-1)</name>
    <dbReference type="NCBI Taxonomy" id="536047"/>
    <lineage>
        <taxon>Eukaryota</taxon>
        <taxon>Sar</taxon>
        <taxon>Stramenopiles</taxon>
        <taxon>Ochrophyta</taxon>
        <taxon>Raphidophyceae</taxon>
        <taxon>Chattonellales</taxon>
        <taxon>Chattonellaceae</taxon>
        <taxon>Heterosigma</taxon>
    </lineage>
</organism>
<evidence type="ECO:0000250" key="1"/>
<evidence type="ECO:0000305" key="2"/>
<reference key="1">
    <citation type="journal article" date="2008" name="BMC Genomics">
        <title>Chloroplast genome sequencing analysis of Heterosigma akashiwo CCMP452 (West Atlantic) and NIES293 (West Pacific) strains.</title>
        <authorList>
            <person name="Cattolico R.A."/>
            <person name="Jacobs M.A."/>
            <person name="Zhou Y."/>
            <person name="Chang J."/>
            <person name="Duplessis M."/>
            <person name="Lybrand T."/>
            <person name="McKay J."/>
            <person name="Ong H.C."/>
            <person name="Sims E."/>
            <person name="Rocap G."/>
        </authorList>
    </citation>
    <scope>NUCLEOTIDE SEQUENCE [LARGE SCALE GENOMIC DNA]</scope>
</reference>
<comment type="function">
    <text evidence="1">One of two assembly initiator proteins, it binds directly to the 5'-end of the 23S rRNA, where it nucleates assembly of the 50S subunit.</text>
</comment>
<comment type="subunit">
    <text evidence="1">Part of the 50S ribosomal subunit.</text>
</comment>
<comment type="subcellular location">
    <subcellularLocation>
        <location>Plastid</location>
        <location>Chloroplast</location>
    </subcellularLocation>
</comment>
<comment type="similarity">
    <text evidence="2">Belongs to the universal ribosomal protein uL24 family.</text>
</comment>
<feature type="chain" id="PRO_0000355745" description="Large ribosomal subunit protein uL24c">
    <location>
        <begin position="1"/>
        <end position="86"/>
    </location>
</feature>
<dbReference type="EMBL" id="EU168190">
    <property type="protein sequence ID" value="ABV66042.1"/>
    <property type="molecule type" value="Genomic_DNA"/>
</dbReference>
<dbReference type="RefSeq" id="YP_001936436.1">
    <property type="nucleotide sequence ID" value="NC_010772.1"/>
</dbReference>
<dbReference type="SMR" id="B2XTE4"/>
<dbReference type="GeneID" id="6335559"/>
<dbReference type="GO" id="GO:0009507">
    <property type="term" value="C:chloroplast"/>
    <property type="evidence" value="ECO:0007669"/>
    <property type="project" value="UniProtKB-SubCell"/>
</dbReference>
<dbReference type="GO" id="GO:1990904">
    <property type="term" value="C:ribonucleoprotein complex"/>
    <property type="evidence" value="ECO:0007669"/>
    <property type="project" value="UniProtKB-KW"/>
</dbReference>
<dbReference type="GO" id="GO:0005840">
    <property type="term" value="C:ribosome"/>
    <property type="evidence" value="ECO:0007669"/>
    <property type="project" value="UniProtKB-KW"/>
</dbReference>
<dbReference type="GO" id="GO:0019843">
    <property type="term" value="F:rRNA binding"/>
    <property type="evidence" value="ECO:0007669"/>
    <property type="project" value="UniProtKB-UniRule"/>
</dbReference>
<dbReference type="GO" id="GO:0003735">
    <property type="term" value="F:structural constituent of ribosome"/>
    <property type="evidence" value="ECO:0007669"/>
    <property type="project" value="InterPro"/>
</dbReference>
<dbReference type="GO" id="GO:0006412">
    <property type="term" value="P:translation"/>
    <property type="evidence" value="ECO:0007669"/>
    <property type="project" value="UniProtKB-UniRule"/>
</dbReference>
<dbReference type="CDD" id="cd06089">
    <property type="entry name" value="KOW_RPL26"/>
    <property type="match status" value="1"/>
</dbReference>
<dbReference type="Gene3D" id="2.30.30.30">
    <property type="match status" value="1"/>
</dbReference>
<dbReference type="HAMAP" id="MF_01326_B">
    <property type="entry name" value="Ribosomal_uL24_B"/>
    <property type="match status" value="1"/>
</dbReference>
<dbReference type="InterPro" id="IPR005824">
    <property type="entry name" value="KOW"/>
</dbReference>
<dbReference type="InterPro" id="IPR014722">
    <property type="entry name" value="Rib_uL2_dom2"/>
</dbReference>
<dbReference type="InterPro" id="IPR003256">
    <property type="entry name" value="Ribosomal_uL24"/>
</dbReference>
<dbReference type="InterPro" id="IPR005825">
    <property type="entry name" value="Ribosomal_uL24_CS"/>
</dbReference>
<dbReference type="InterPro" id="IPR041988">
    <property type="entry name" value="Ribosomal_uL24_KOW"/>
</dbReference>
<dbReference type="InterPro" id="IPR008991">
    <property type="entry name" value="Translation_prot_SH3-like_sf"/>
</dbReference>
<dbReference type="NCBIfam" id="TIGR01079">
    <property type="entry name" value="rplX_bact"/>
    <property type="match status" value="1"/>
</dbReference>
<dbReference type="PANTHER" id="PTHR12903">
    <property type="entry name" value="MITOCHONDRIAL RIBOSOMAL PROTEIN L24"/>
    <property type="match status" value="1"/>
</dbReference>
<dbReference type="Pfam" id="PF17136">
    <property type="entry name" value="ribosomal_L24"/>
    <property type="match status" value="1"/>
</dbReference>
<dbReference type="SMART" id="SM00739">
    <property type="entry name" value="KOW"/>
    <property type="match status" value="1"/>
</dbReference>
<dbReference type="SUPFAM" id="SSF50104">
    <property type="entry name" value="Translation proteins SH3-like domain"/>
    <property type="match status" value="1"/>
</dbReference>
<dbReference type="PROSITE" id="PS01108">
    <property type="entry name" value="RIBOSOMAL_L24"/>
    <property type="match status" value="1"/>
</dbReference>
<gene>
    <name type="primary">rpl24</name>
    <name type="ordered locus">Heak293_Cp135</name>
</gene>
<geneLocation type="chloroplast"/>
<accession>B2XTE4</accession>
<keyword id="KW-0150">Chloroplast</keyword>
<keyword id="KW-0934">Plastid</keyword>
<keyword id="KW-0687">Ribonucleoprotein</keyword>
<keyword id="KW-0689">Ribosomal protein</keyword>
<keyword id="KW-0694">RNA-binding</keyword>
<keyword id="KW-0699">rRNA-binding</keyword>
<proteinExistence type="inferred from homology"/>
<protein>
    <recommendedName>
        <fullName evidence="2">Large ribosomal subunit protein uL24c</fullName>
    </recommendedName>
    <alternativeName>
        <fullName>50S ribosomal protein L24, chloroplastic</fullName>
    </alternativeName>
</protein>
<name>RK24_HETA2</name>
<sequence>MKKLTKTNLKYKKQSLKIGDLVEIIAGNDKKKQGTVKAIIKSQEKVIVEGINQRFKHIKPQRSNETGKINQFEAPIHRSNVKKINN</sequence>